<protein>
    <recommendedName>
        <fullName evidence="1">CTP synthase</fullName>
        <ecNumber evidence="1">6.3.4.2</ecNumber>
    </recommendedName>
    <alternativeName>
        <fullName evidence="1">Cytidine 5'-triphosphate synthase</fullName>
    </alternativeName>
    <alternativeName>
        <fullName evidence="1">Cytidine triphosphate synthetase</fullName>
        <shortName evidence="1">CTP synthetase</shortName>
        <shortName evidence="1">CTPS</shortName>
    </alternativeName>
    <alternativeName>
        <fullName evidence="1">UTP--ammonia ligase</fullName>
    </alternativeName>
</protein>
<name>PYRG_CALMQ</name>
<dbReference type="EC" id="6.3.4.2" evidence="1"/>
<dbReference type="EMBL" id="CP000852">
    <property type="protein sequence ID" value="ABW01179.1"/>
    <property type="molecule type" value="Genomic_DNA"/>
</dbReference>
<dbReference type="RefSeq" id="WP_012185399.1">
    <property type="nucleotide sequence ID" value="NC_009954.1"/>
</dbReference>
<dbReference type="SMR" id="A8MB89"/>
<dbReference type="STRING" id="397948.Cmaq_0333"/>
<dbReference type="MEROPS" id="C26.964"/>
<dbReference type="GeneID" id="5708853"/>
<dbReference type="KEGG" id="cma:Cmaq_0333"/>
<dbReference type="eggNOG" id="arCOG00063">
    <property type="taxonomic scope" value="Archaea"/>
</dbReference>
<dbReference type="HOGENOM" id="CLU_011675_5_0_2"/>
<dbReference type="OrthoDB" id="52769at2157"/>
<dbReference type="UniPathway" id="UPA00159">
    <property type="reaction ID" value="UER00277"/>
</dbReference>
<dbReference type="Proteomes" id="UP000001137">
    <property type="component" value="Chromosome"/>
</dbReference>
<dbReference type="GO" id="GO:0005524">
    <property type="term" value="F:ATP binding"/>
    <property type="evidence" value="ECO:0007669"/>
    <property type="project" value="UniProtKB-KW"/>
</dbReference>
<dbReference type="GO" id="GO:0003883">
    <property type="term" value="F:CTP synthase activity"/>
    <property type="evidence" value="ECO:0007669"/>
    <property type="project" value="UniProtKB-UniRule"/>
</dbReference>
<dbReference type="GO" id="GO:0004359">
    <property type="term" value="F:glutaminase activity"/>
    <property type="evidence" value="ECO:0007669"/>
    <property type="project" value="RHEA"/>
</dbReference>
<dbReference type="GO" id="GO:0042802">
    <property type="term" value="F:identical protein binding"/>
    <property type="evidence" value="ECO:0007669"/>
    <property type="project" value="TreeGrafter"/>
</dbReference>
<dbReference type="GO" id="GO:0046872">
    <property type="term" value="F:metal ion binding"/>
    <property type="evidence" value="ECO:0007669"/>
    <property type="project" value="UniProtKB-KW"/>
</dbReference>
<dbReference type="GO" id="GO:0044210">
    <property type="term" value="P:'de novo' CTP biosynthetic process"/>
    <property type="evidence" value="ECO:0007669"/>
    <property type="project" value="UniProtKB-UniRule"/>
</dbReference>
<dbReference type="GO" id="GO:0019856">
    <property type="term" value="P:pyrimidine nucleobase biosynthetic process"/>
    <property type="evidence" value="ECO:0007669"/>
    <property type="project" value="TreeGrafter"/>
</dbReference>
<dbReference type="CDD" id="cd03113">
    <property type="entry name" value="CTPS_N"/>
    <property type="match status" value="1"/>
</dbReference>
<dbReference type="CDD" id="cd01746">
    <property type="entry name" value="GATase1_CTP_Synthase"/>
    <property type="match status" value="1"/>
</dbReference>
<dbReference type="FunFam" id="3.40.50.300:FF:000009">
    <property type="entry name" value="CTP synthase"/>
    <property type="match status" value="1"/>
</dbReference>
<dbReference type="FunFam" id="3.40.50.880:FF:000002">
    <property type="entry name" value="CTP synthase"/>
    <property type="match status" value="1"/>
</dbReference>
<dbReference type="Gene3D" id="3.40.50.880">
    <property type="match status" value="1"/>
</dbReference>
<dbReference type="Gene3D" id="3.40.50.300">
    <property type="entry name" value="P-loop containing nucleotide triphosphate hydrolases"/>
    <property type="match status" value="1"/>
</dbReference>
<dbReference type="HAMAP" id="MF_01227">
    <property type="entry name" value="PyrG"/>
    <property type="match status" value="1"/>
</dbReference>
<dbReference type="InterPro" id="IPR029062">
    <property type="entry name" value="Class_I_gatase-like"/>
</dbReference>
<dbReference type="InterPro" id="IPR004468">
    <property type="entry name" value="CTP_synthase"/>
</dbReference>
<dbReference type="InterPro" id="IPR017456">
    <property type="entry name" value="CTP_synthase_N"/>
</dbReference>
<dbReference type="InterPro" id="IPR017926">
    <property type="entry name" value="GATASE"/>
</dbReference>
<dbReference type="InterPro" id="IPR033828">
    <property type="entry name" value="GATase1_CTP_Synthase"/>
</dbReference>
<dbReference type="InterPro" id="IPR027417">
    <property type="entry name" value="P-loop_NTPase"/>
</dbReference>
<dbReference type="NCBIfam" id="NF003792">
    <property type="entry name" value="PRK05380.1"/>
    <property type="match status" value="1"/>
</dbReference>
<dbReference type="NCBIfam" id="TIGR00337">
    <property type="entry name" value="PyrG"/>
    <property type="match status" value="1"/>
</dbReference>
<dbReference type="PANTHER" id="PTHR11550">
    <property type="entry name" value="CTP SYNTHASE"/>
    <property type="match status" value="1"/>
</dbReference>
<dbReference type="PANTHER" id="PTHR11550:SF0">
    <property type="entry name" value="CTP SYNTHASE-RELATED"/>
    <property type="match status" value="1"/>
</dbReference>
<dbReference type="Pfam" id="PF06418">
    <property type="entry name" value="CTP_synth_N"/>
    <property type="match status" value="1"/>
</dbReference>
<dbReference type="Pfam" id="PF00117">
    <property type="entry name" value="GATase"/>
    <property type="match status" value="1"/>
</dbReference>
<dbReference type="SUPFAM" id="SSF52317">
    <property type="entry name" value="Class I glutamine amidotransferase-like"/>
    <property type="match status" value="1"/>
</dbReference>
<dbReference type="SUPFAM" id="SSF52540">
    <property type="entry name" value="P-loop containing nucleoside triphosphate hydrolases"/>
    <property type="match status" value="1"/>
</dbReference>
<dbReference type="PROSITE" id="PS51273">
    <property type="entry name" value="GATASE_TYPE_1"/>
    <property type="match status" value="1"/>
</dbReference>
<reference key="1">
    <citation type="submission" date="2007-10" db="EMBL/GenBank/DDBJ databases">
        <title>Complete sequence of Caldivirga maquilingensis IC-167.</title>
        <authorList>
            <consortium name="US DOE Joint Genome Institute"/>
            <person name="Copeland A."/>
            <person name="Lucas S."/>
            <person name="Lapidus A."/>
            <person name="Barry K."/>
            <person name="Glavina del Rio T."/>
            <person name="Dalin E."/>
            <person name="Tice H."/>
            <person name="Pitluck S."/>
            <person name="Saunders E."/>
            <person name="Brettin T."/>
            <person name="Bruce D."/>
            <person name="Detter J.C."/>
            <person name="Han C."/>
            <person name="Schmutz J."/>
            <person name="Larimer F."/>
            <person name="Land M."/>
            <person name="Hauser L."/>
            <person name="Kyrpides N."/>
            <person name="Ivanova N."/>
            <person name="Biddle J.F."/>
            <person name="Zhang Z."/>
            <person name="Fitz-Gibbon S.T."/>
            <person name="Lowe T.M."/>
            <person name="Saltikov C."/>
            <person name="House C.H."/>
            <person name="Richardson P."/>
        </authorList>
    </citation>
    <scope>NUCLEOTIDE SEQUENCE [LARGE SCALE GENOMIC DNA]</scope>
    <source>
        <strain>ATCC 700844 / DSM 13496 / JCM 10307 / IC-167</strain>
    </source>
</reference>
<comment type="function">
    <text evidence="1">Catalyzes the ATP-dependent amination of UTP to CTP with either L-glutamine or ammonia as the source of nitrogen. Regulates intracellular CTP levels through interactions with the four ribonucleotide triphosphates.</text>
</comment>
<comment type="catalytic activity">
    <reaction evidence="1">
        <text>UTP + L-glutamine + ATP + H2O = CTP + L-glutamate + ADP + phosphate + 2 H(+)</text>
        <dbReference type="Rhea" id="RHEA:26426"/>
        <dbReference type="ChEBI" id="CHEBI:15377"/>
        <dbReference type="ChEBI" id="CHEBI:15378"/>
        <dbReference type="ChEBI" id="CHEBI:29985"/>
        <dbReference type="ChEBI" id="CHEBI:30616"/>
        <dbReference type="ChEBI" id="CHEBI:37563"/>
        <dbReference type="ChEBI" id="CHEBI:43474"/>
        <dbReference type="ChEBI" id="CHEBI:46398"/>
        <dbReference type="ChEBI" id="CHEBI:58359"/>
        <dbReference type="ChEBI" id="CHEBI:456216"/>
        <dbReference type="EC" id="6.3.4.2"/>
    </reaction>
</comment>
<comment type="catalytic activity">
    <reaction evidence="1">
        <text>L-glutamine + H2O = L-glutamate + NH4(+)</text>
        <dbReference type="Rhea" id="RHEA:15889"/>
        <dbReference type="ChEBI" id="CHEBI:15377"/>
        <dbReference type="ChEBI" id="CHEBI:28938"/>
        <dbReference type="ChEBI" id="CHEBI:29985"/>
        <dbReference type="ChEBI" id="CHEBI:58359"/>
    </reaction>
</comment>
<comment type="catalytic activity">
    <reaction evidence="1">
        <text>UTP + NH4(+) + ATP = CTP + ADP + phosphate + 2 H(+)</text>
        <dbReference type="Rhea" id="RHEA:16597"/>
        <dbReference type="ChEBI" id="CHEBI:15378"/>
        <dbReference type="ChEBI" id="CHEBI:28938"/>
        <dbReference type="ChEBI" id="CHEBI:30616"/>
        <dbReference type="ChEBI" id="CHEBI:37563"/>
        <dbReference type="ChEBI" id="CHEBI:43474"/>
        <dbReference type="ChEBI" id="CHEBI:46398"/>
        <dbReference type="ChEBI" id="CHEBI:456216"/>
    </reaction>
</comment>
<comment type="activity regulation">
    <text evidence="1">Allosterically activated by GTP, when glutamine is the substrate; GTP has no effect on the reaction when ammonia is the substrate. The allosteric effector GTP functions by stabilizing the protein conformation that binds the tetrahedral intermediate(s) formed during glutamine hydrolysis. Inhibited by the product CTP, via allosteric rather than competitive inhibition.</text>
</comment>
<comment type="pathway">
    <text evidence="1">Pyrimidine metabolism; CTP biosynthesis via de novo pathway; CTP from UDP: step 2/2.</text>
</comment>
<comment type="subunit">
    <text evidence="1">Homotetramer.</text>
</comment>
<comment type="miscellaneous">
    <text evidence="1">CTPSs have evolved a hybrid strategy for distinguishing between UTP and CTP. The overlapping regions of the product feedback inhibitory and substrate sites recognize a common feature in both compounds, the triphosphate moiety. To differentiate isosteric substrate and product pyrimidine rings, an additional pocket far from the expected kinase/ligase catalytic site, specifically recognizes the cytosine and ribose portions of the product inhibitor.</text>
</comment>
<comment type="similarity">
    <text evidence="1">Belongs to the CTP synthase family.</text>
</comment>
<gene>
    <name evidence="1" type="primary">pyrG</name>
    <name type="ordered locus">Cmaq_0333</name>
</gene>
<organism>
    <name type="scientific">Caldivirga maquilingensis (strain ATCC 700844 / DSM 13496 / JCM 10307 / IC-167)</name>
    <dbReference type="NCBI Taxonomy" id="397948"/>
    <lineage>
        <taxon>Archaea</taxon>
        <taxon>Thermoproteota</taxon>
        <taxon>Thermoprotei</taxon>
        <taxon>Thermoproteales</taxon>
        <taxon>Thermoproteaceae</taxon>
        <taxon>Caldivirga</taxon>
    </lineage>
</organism>
<proteinExistence type="inferred from homology"/>
<evidence type="ECO:0000255" key="1">
    <source>
        <dbReference type="HAMAP-Rule" id="MF_01227"/>
    </source>
</evidence>
<keyword id="KW-0067">ATP-binding</keyword>
<keyword id="KW-0315">Glutamine amidotransferase</keyword>
<keyword id="KW-0436">Ligase</keyword>
<keyword id="KW-0460">Magnesium</keyword>
<keyword id="KW-0479">Metal-binding</keyword>
<keyword id="KW-0547">Nucleotide-binding</keyword>
<keyword id="KW-0665">Pyrimidine biosynthesis</keyword>
<keyword id="KW-1185">Reference proteome</keyword>
<sequence length="542" mass="60671">MTAFIFITGGVMSSVGKGIATASIAKILQARGLSVTAIKVDPYLNVDAGTMNPYQHGEVYVTADGGETDLDLGHYERFLDVELSKSHNITSGQVYLSVIDGERRGVYLGQTVQLIPHVTNEIKARIRAIAKEGWDAVVIEIGGTVGDYESLPFLEAARQMRLEENGNVVFVHVAPVPILDVTDEFKTKPLQHSVMELRRVGIQPDIIIIRSTRPITNDVKAKVSLFTNVPQNLIFNSFNVDTIYRVPLILDEQGLGRMLTELLKVKVNEPKWDDWVNLVNSMVNATDEVKVTLCGKYVKLRDAYISIVEAIRHAAAWLRVKPRIIWCDSEEVEKDPDLLPKMNTDAYIILPGFGARGVEGKIMAIRYARENNIPLLGICYGMQLSVVEYARDVLGLKDAHTTEVNPNTTHPVIDITPEEKSINKLGGTMILGDREISITEGSILHGIYGSLRIRERHRHRYEVNPAYFKQLQEAGLVFSAMRIDVPRVEAIELHNHYFFIATQFHPEFRSRLTRPHPLFTALLKAALARKMGLESPYTGVKP</sequence>
<accession>A8MB89</accession>
<feature type="chain" id="PRO_1000139408" description="CTP synthase">
    <location>
        <begin position="1"/>
        <end position="542"/>
    </location>
</feature>
<feature type="domain" description="Glutamine amidotransferase type-1" evidence="1">
    <location>
        <begin position="297"/>
        <end position="532"/>
    </location>
</feature>
<feature type="region of interest" description="Amidoligase domain" evidence="1">
    <location>
        <begin position="1"/>
        <end position="265"/>
    </location>
</feature>
<feature type="active site" description="Nucleophile; for glutamine hydrolysis" evidence="1">
    <location>
        <position position="379"/>
    </location>
</feature>
<feature type="active site" evidence="1">
    <location>
        <position position="505"/>
    </location>
</feature>
<feature type="active site" evidence="1">
    <location>
        <position position="507"/>
    </location>
</feature>
<feature type="binding site" evidence="1">
    <location>
        <position position="13"/>
    </location>
    <ligand>
        <name>CTP</name>
        <dbReference type="ChEBI" id="CHEBI:37563"/>
        <note>allosteric inhibitor</note>
    </ligand>
</feature>
<feature type="binding site" evidence="1">
    <location>
        <position position="13"/>
    </location>
    <ligand>
        <name>UTP</name>
        <dbReference type="ChEBI" id="CHEBI:46398"/>
    </ligand>
</feature>
<feature type="binding site" evidence="1">
    <location>
        <begin position="14"/>
        <end position="19"/>
    </location>
    <ligand>
        <name>ATP</name>
        <dbReference type="ChEBI" id="CHEBI:30616"/>
    </ligand>
</feature>
<feature type="binding site" evidence="1">
    <location>
        <position position="54"/>
    </location>
    <ligand>
        <name>L-glutamine</name>
        <dbReference type="ChEBI" id="CHEBI:58359"/>
    </ligand>
</feature>
<feature type="binding site" evidence="1">
    <location>
        <position position="71"/>
    </location>
    <ligand>
        <name>ATP</name>
        <dbReference type="ChEBI" id="CHEBI:30616"/>
    </ligand>
</feature>
<feature type="binding site" evidence="1">
    <location>
        <position position="71"/>
    </location>
    <ligand>
        <name>Mg(2+)</name>
        <dbReference type="ChEBI" id="CHEBI:18420"/>
    </ligand>
</feature>
<feature type="binding site" evidence="1">
    <location>
        <position position="140"/>
    </location>
    <ligand>
        <name>Mg(2+)</name>
        <dbReference type="ChEBI" id="CHEBI:18420"/>
    </ligand>
</feature>
<feature type="binding site" evidence="1">
    <location>
        <begin position="147"/>
        <end position="149"/>
    </location>
    <ligand>
        <name>CTP</name>
        <dbReference type="ChEBI" id="CHEBI:37563"/>
        <note>allosteric inhibitor</note>
    </ligand>
</feature>
<feature type="binding site" evidence="1">
    <location>
        <begin position="186"/>
        <end position="191"/>
    </location>
    <ligand>
        <name>CTP</name>
        <dbReference type="ChEBI" id="CHEBI:37563"/>
        <note>allosteric inhibitor</note>
    </ligand>
</feature>
<feature type="binding site" evidence="1">
    <location>
        <begin position="186"/>
        <end position="191"/>
    </location>
    <ligand>
        <name>UTP</name>
        <dbReference type="ChEBI" id="CHEBI:46398"/>
    </ligand>
</feature>
<feature type="binding site" evidence="1">
    <location>
        <position position="222"/>
    </location>
    <ligand>
        <name>CTP</name>
        <dbReference type="ChEBI" id="CHEBI:37563"/>
        <note>allosteric inhibitor</note>
    </ligand>
</feature>
<feature type="binding site" evidence="1">
    <location>
        <position position="222"/>
    </location>
    <ligand>
        <name>UTP</name>
        <dbReference type="ChEBI" id="CHEBI:46398"/>
    </ligand>
</feature>
<feature type="binding site" evidence="1">
    <location>
        <position position="352"/>
    </location>
    <ligand>
        <name>L-glutamine</name>
        <dbReference type="ChEBI" id="CHEBI:58359"/>
    </ligand>
</feature>
<feature type="binding site" evidence="1">
    <location>
        <begin position="380"/>
        <end position="383"/>
    </location>
    <ligand>
        <name>L-glutamine</name>
        <dbReference type="ChEBI" id="CHEBI:58359"/>
    </ligand>
</feature>
<feature type="binding site" evidence="1">
    <location>
        <position position="403"/>
    </location>
    <ligand>
        <name>L-glutamine</name>
        <dbReference type="ChEBI" id="CHEBI:58359"/>
    </ligand>
</feature>
<feature type="binding site" evidence="1">
    <location>
        <position position="460"/>
    </location>
    <ligand>
        <name>L-glutamine</name>
        <dbReference type="ChEBI" id="CHEBI:58359"/>
    </ligand>
</feature>